<feature type="chain" id="PRO_1000017372" description="DNA integrity scanning protein DisA">
    <location>
        <begin position="1"/>
        <end position="357"/>
    </location>
</feature>
<feature type="domain" description="DAC" evidence="2">
    <location>
        <begin position="3"/>
        <end position="141"/>
    </location>
</feature>
<feature type="binding site" evidence="1">
    <location>
        <position position="70"/>
    </location>
    <ligand>
        <name>ATP</name>
        <dbReference type="ChEBI" id="CHEBI:30616"/>
    </ligand>
</feature>
<feature type="binding site" evidence="1">
    <location>
        <position position="88"/>
    </location>
    <ligand>
        <name>ATP</name>
        <dbReference type="ChEBI" id="CHEBI:30616"/>
    </ligand>
</feature>
<feature type="binding site" evidence="1">
    <location>
        <begin position="101"/>
        <end position="105"/>
    </location>
    <ligand>
        <name>ATP</name>
        <dbReference type="ChEBI" id="CHEBI:30616"/>
    </ligand>
</feature>
<reference key="1">
    <citation type="submission" date="2006-10" db="EMBL/GenBank/DDBJ databases">
        <authorList>
            <person name="Fleischmann R.D."/>
            <person name="Dodson R.J."/>
            <person name="Haft D.H."/>
            <person name="Merkel J.S."/>
            <person name="Nelson W.C."/>
            <person name="Fraser C.M."/>
        </authorList>
    </citation>
    <scope>NUCLEOTIDE SEQUENCE [LARGE SCALE GENOMIC DNA]</scope>
    <source>
        <strain>104</strain>
    </source>
</reference>
<organism>
    <name type="scientific">Mycobacterium avium (strain 104)</name>
    <dbReference type="NCBI Taxonomy" id="243243"/>
    <lineage>
        <taxon>Bacteria</taxon>
        <taxon>Bacillati</taxon>
        <taxon>Actinomycetota</taxon>
        <taxon>Actinomycetes</taxon>
        <taxon>Mycobacteriales</taxon>
        <taxon>Mycobacteriaceae</taxon>
        <taxon>Mycobacterium</taxon>
        <taxon>Mycobacterium avium complex (MAC)</taxon>
    </lineage>
</organism>
<accession>A0QAA9</accession>
<comment type="function">
    <text evidence="1">Participates in a DNA-damage check-point. DisA forms globular foci that rapidly scan along the chromosomes searching for lesions.</text>
</comment>
<comment type="function">
    <text evidence="1">Also has diadenylate cyclase activity, catalyzing the condensation of 2 ATP molecules into cyclic di-AMP (c-di-AMP). c-di-AMP likely acts as a signaling molecule that may couple DNA integrity with a cellular process.</text>
</comment>
<comment type="catalytic activity">
    <reaction evidence="1">
        <text>2 ATP = 3',3'-c-di-AMP + 2 diphosphate</text>
        <dbReference type="Rhea" id="RHEA:35655"/>
        <dbReference type="ChEBI" id="CHEBI:30616"/>
        <dbReference type="ChEBI" id="CHEBI:33019"/>
        <dbReference type="ChEBI" id="CHEBI:71500"/>
        <dbReference type="EC" id="2.7.7.85"/>
    </reaction>
</comment>
<comment type="cofactor">
    <cofactor evidence="1">
        <name>Mg(2+)</name>
        <dbReference type="ChEBI" id="CHEBI:18420"/>
    </cofactor>
</comment>
<comment type="subunit">
    <text evidence="1">Homooctamer.</text>
</comment>
<comment type="similarity">
    <text evidence="1">Belongs to the DisA family.</text>
</comment>
<protein>
    <recommendedName>
        <fullName evidence="1">DNA integrity scanning protein DisA</fullName>
    </recommendedName>
    <alternativeName>
        <fullName evidence="1">Cyclic di-AMP synthase</fullName>
        <shortName evidence="1">c-di-AMP synthase</shortName>
    </alternativeName>
    <alternativeName>
        <fullName evidence="1">Diadenylate cyclase</fullName>
        <ecNumber evidence="1">2.7.7.85</ecNumber>
    </alternativeName>
</protein>
<gene>
    <name evidence="1" type="primary">disA</name>
    <name type="ordered locus">MAV_0567</name>
</gene>
<dbReference type="EC" id="2.7.7.85" evidence="1"/>
<dbReference type="EMBL" id="CP000479">
    <property type="protein sequence ID" value="ABK68252.1"/>
    <property type="molecule type" value="Genomic_DNA"/>
</dbReference>
<dbReference type="RefSeq" id="WP_009974755.1">
    <property type="nucleotide sequence ID" value="NC_008595.1"/>
</dbReference>
<dbReference type="SMR" id="A0QAA9"/>
<dbReference type="GeneID" id="75268419"/>
<dbReference type="KEGG" id="mav:MAV_0567"/>
<dbReference type="HOGENOM" id="CLU_787128_0_0_11"/>
<dbReference type="Proteomes" id="UP000001574">
    <property type="component" value="Chromosome"/>
</dbReference>
<dbReference type="GO" id="GO:0004016">
    <property type="term" value="F:adenylate cyclase activity"/>
    <property type="evidence" value="ECO:0007669"/>
    <property type="project" value="TreeGrafter"/>
</dbReference>
<dbReference type="GO" id="GO:0005524">
    <property type="term" value="F:ATP binding"/>
    <property type="evidence" value="ECO:0007669"/>
    <property type="project" value="UniProtKB-UniRule"/>
</dbReference>
<dbReference type="GO" id="GO:0106408">
    <property type="term" value="F:diadenylate cyclase activity"/>
    <property type="evidence" value="ECO:0007669"/>
    <property type="project" value="UniProtKB-EC"/>
</dbReference>
<dbReference type="GO" id="GO:0003677">
    <property type="term" value="F:DNA binding"/>
    <property type="evidence" value="ECO:0007669"/>
    <property type="project" value="UniProtKB-UniRule"/>
</dbReference>
<dbReference type="GO" id="GO:0006281">
    <property type="term" value="P:DNA repair"/>
    <property type="evidence" value="ECO:0007669"/>
    <property type="project" value="UniProtKB-UniRule"/>
</dbReference>
<dbReference type="FunFam" id="1.20.1260.110:FF:000002">
    <property type="entry name" value="DNA integrity scanning protein DisA"/>
    <property type="match status" value="1"/>
</dbReference>
<dbReference type="FunFam" id="3.40.1700.10:FF:000001">
    <property type="entry name" value="DNA integrity scanning protein DisA"/>
    <property type="match status" value="1"/>
</dbReference>
<dbReference type="Gene3D" id="1.10.150.20">
    <property type="entry name" value="5' to 3' exonuclease, C-terminal subdomain"/>
    <property type="match status" value="1"/>
</dbReference>
<dbReference type="Gene3D" id="1.20.1260.110">
    <property type="entry name" value="DNA integrity scanning linker region"/>
    <property type="match status" value="1"/>
</dbReference>
<dbReference type="Gene3D" id="3.40.1700.10">
    <property type="entry name" value="DNA integrity scanning protein, DisA, N-terminal domain"/>
    <property type="match status" value="1"/>
</dbReference>
<dbReference type="HAMAP" id="MF_01438">
    <property type="entry name" value="DisA"/>
    <property type="match status" value="1"/>
</dbReference>
<dbReference type="InterPro" id="IPR050338">
    <property type="entry name" value="DisA"/>
</dbReference>
<dbReference type="InterPro" id="IPR041663">
    <property type="entry name" value="DisA/LigA_HHH"/>
</dbReference>
<dbReference type="InterPro" id="IPR038331">
    <property type="entry name" value="DisA_sf"/>
</dbReference>
<dbReference type="InterPro" id="IPR036888">
    <property type="entry name" value="DNA_integrity_DisA_N_sf"/>
</dbReference>
<dbReference type="InterPro" id="IPR018906">
    <property type="entry name" value="DNA_integrity_scan_DisA_link"/>
</dbReference>
<dbReference type="InterPro" id="IPR003390">
    <property type="entry name" value="DNA_integrity_scan_DisA_N"/>
</dbReference>
<dbReference type="InterPro" id="IPR023763">
    <property type="entry name" value="DNA_integrity_scanning_protein"/>
</dbReference>
<dbReference type="InterPro" id="IPR010994">
    <property type="entry name" value="RuvA_2-like"/>
</dbReference>
<dbReference type="NCBIfam" id="NF010009">
    <property type="entry name" value="PRK13482.1"/>
    <property type="match status" value="1"/>
</dbReference>
<dbReference type="PANTHER" id="PTHR34185">
    <property type="entry name" value="DIADENYLATE CYCLASE"/>
    <property type="match status" value="1"/>
</dbReference>
<dbReference type="PANTHER" id="PTHR34185:SF3">
    <property type="entry name" value="DNA INTEGRITY SCANNING PROTEIN DISA"/>
    <property type="match status" value="1"/>
</dbReference>
<dbReference type="Pfam" id="PF02457">
    <property type="entry name" value="DAC"/>
    <property type="match status" value="1"/>
</dbReference>
<dbReference type="Pfam" id="PF10635">
    <property type="entry name" value="DisA-linker"/>
    <property type="match status" value="1"/>
</dbReference>
<dbReference type="Pfam" id="PF12826">
    <property type="entry name" value="HHH_2"/>
    <property type="match status" value="1"/>
</dbReference>
<dbReference type="SUPFAM" id="SSF47781">
    <property type="entry name" value="RuvA domain 2-like"/>
    <property type="match status" value="1"/>
</dbReference>
<dbReference type="SUPFAM" id="SSF143597">
    <property type="entry name" value="YojJ-like"/>
    <property type="match status" value="1"/>
</dbReference>
<dbReference type="PROSITE" id="PS51794">
    <property type="entry name" value="DAC"/>
    <property type="match status" value="1"/>
</dbReference>
<proteinExistence type="inferred from homology"/>
<name>DISA_MYCA1</name>
<evidence type="ECO:0000255" key="1">
    <source>
        <dbReference type="HAMAP-Rule" id="MF_01438"/>
    </source>
</evidence>
<evidence type="ECO:0000255" key="2">
    <source>
        <dbReference type="PROSITE-ProRule" id="PRU01130"/>
    </source>
</evidence>
<sequence length="357" mass="38821">MTRPTLRETVARLAPGTGLRDGLERILRGRTGALIVLGNDENVEAICDGGFALDVRYAPTRLRELAKMDGAVVLSTDGSRIVRANVQLVPDPSIATDESGTRHRSAERAAIQTGYPVISVSHSMNIVTVYVGGERHVVADSATILSRANQAIATLERYKIRLDEVSRQLSRAEIEDFVTLRDVLTVVQRLELVRRIGQVIDNDVVELGTDGRQLRLQLDELLGGNDNARELIVRDYHASPEPLSEAQMTATLDELDALSDTELLDFTALAKVFGYPTTTEAQDSAVSPRGYRALAGIPRLQFAHADLLVRSFGTLQNVLAASASDLQSIDGIGAMWARHVREGLSQLAESTITDSLS</sequence>
<keyword id="KW-0067">ATP-binding</keyword>
<keyword id="KW-0227">DNA damage</keyword>
<keyword id="KW-0234">DNA repair</keyword>
<keyword id="KW-0238">DNA-binding</keyword>
<keyword id="KW-0460">Magnesium</keyword>
<keyword id="KW-0547">Nucleotide-binding</keyword>
<keyword id="KW-0548">Nucleotidyltransferase</keyword>
<keyword id="KW-0808">Transferase</keyword>